<organism>
    <name type="scientific">Rubrivivax gelatinosus</name>
    <name type="common">Rhodocyclus gelatinosus</name>
    <name type="synonym">Rhodopseudomonas gelatinosa</name>
    <dbReference type="NCBI Taxonomy" id="28068"/>
    <lineage>
        <taxon>Bacteria</taxon>
        <taxon>Pseudomonadati</taxon>
        <taxon>Pseudomonadota</taxon>
        <taxon>Betaproteobacteria</taxon>
        <taxon>Burkholderiales</taxon>
        <taxon>Sphaerotilaceae</taxon>
        <taxon>Rubrivivax</taxon>
    </lineage>
</organism>
<sequence length="74" mass="7616">APVDEKNPQAVALGYVSDAAKADKAKYKQFVAGSHCGNCALFQGKATDAVGGCPLFAGKQVANKGWCSAWAKKA</sequence>
<reference key="1">
    <citation type="journal article" date="1976" name="J. Biol. Chem.">
        <title>Primary structure of a high potential iron-sulfur protein from the purple non-sulfur photosynthetic bacterium Rhodopseudomonas gelatinosa.</title>
        <authorList>
            <person name="Tedro S.M."/>
            <person name="Meyer T.E."/>
            <person name="Kamen M.D."/>
        </authorList>
    </citation>
    <scope>PROTEIN SEQUENCE</scope>
    <source>
        <strain>ATCC 17011 / ATH 2.2.1 / DSM 1709 / LMG 4438 / NBRC 16663 / NCIMB 8290</strain>
    </source>
</reference>
<feature type="chain" id="PRO_0000220425" description="High-potential iron-sulfur protein">
    <location>
        <begin position="1"/>
        <end position="74"/>
    </location>
</feature>
<feature type="binding site">
    <location>
        <position position="36"/>
    </location>
    <ligand>
        <name>[4Fe-4S] cluster</name>
        <dbReference type="ChEBI" id="CHEBI:49883"/>
    </ligand>
</feature>
<feature type="binding site">
    <location>
        <position position="39"/>
    </location>
    <ligand>
        <name>[4Fe-4S] cluster</name>
        <dbReference type="ChEBI" id="CHEBI:49883"/>
    </ligand>
</feature>
<feature type="binding site">
    <location>
        <position position="53"/>
    </location>
    <ligand>
        <name>[4Fe-4S] cluster</name>
        <dbReference type="ChEBI" id="CHEBI:49883"/>
    </ligand>
</feature>
<feature type="binding site">
    <location>
        <position position="67"/>
    </location>
    <ligand>
        <name>[4Fe-4S] cluster</name>
        <dbReference type="ChEBI" id="CHEBI:49883"/>
    </ligand>
</feature>
<proteinExistence type="evidence at protein level"/>
<protein>
    <recommendedName>
        <fullName>High-potential iron-sulfur protein</fullName>
        <shortName>HiPIP</shortName>
    </recommendedName>
</protein>
<dbReference type="PIR" id="A00268">
    <property type="entry name" value="IHRFG"/>
</dbReference>
<dbReference type="SMR" id="P00265"/>
<dbReference type="GO" id="GO:0051539">
    <property type="term" value="F:4 iron, 4 sulfur cluster binding"/>
    <property type="evidence" value="ECO:0007669"/>
    <property type="project" value="UniProtKB-KW"/>
</dbReference>
<dbReference type="GO" id="GO:0009055">
    <property type="term" value="F:electron transfer activity"/>
    <property type="evidence" value="ECO:0007669"/>
    <property type="project" value="InterPro"/>
</dbReference>
<dbReference type="GO" id="GO:0046872">
    <property type="term" value="F:metal ion binding"/>
    <property type="evidence" value="ECO:0007669"/>
    <property type="project" value="UniProtKB-KW"/>
</dbReference>
<dbReference type="GO" id="GO:0019646">
    <property type="term" value="P:aerobic electron transport chain"/>
    <property type="evidence" value="ECO:0007669"/>
    <property type="project" value="InterPro"/>
</dbReference>
<dbReference type="Gene3D" id="4.10.490.10">
    <property type="entry name" value="High potential iron-sulphur protein"/>
    <property type="match status" value="1"/>
</dbReference>
<dbReference type="InterPro" id="IPR000170">
    <property type="entry name" value="High_potential_FeS_prot"/>
</dbReference>
<dbReference type="InterPro" id="IPR036369">
    <property type="entry name" value="HIPIP_sf"/>
</dbReference>
<dbReference type="Pfam" id="PF01355">
    <property type="entry name" value="HIPIP"/>
    <property type="match status" value="1"/>
</dbReference>
<dbReference type="SUPFAM" id="SSF57652">
    <property type="entry name" value="HIPIP (high potential iron protein)"/>
    <property type="match status" value="1"/>
</dbReference>
<dbReference type="PROSITE" id="PS51373">
    <property type="entry name" value="HIPIP"/>
    <property type="match status" value="1"/>
</dbReference>
<name>HIP_RUBGE</name>
<comment type="function">
    <text>Specific class of high-redox-potential 4Fe-4S ferredoxins. Functions in anaerobic electron transport in most purple and in some other photosynthetic bacteria and in at least one genus (Paracoccus) of halophilic, denitrifying bacteria.</text>
</comment>
<comment type="subunit">
    <text evidence="2">Homodimer.</text>
</comment>
<comment type="similarity">
    <text evidence="1">Belongs to the high-potential iron-sulfur protein (HiPIP) family.</text>
</comment>
<accession>P00265</accession>
<keyword id="KW-0004">4Fe-4S</keyword>
<keyword id="KW-0903">Direct protein sequencing</keyword>
<keyword id="KW-0249">Electron transport</keyword>
<keyword id="KW-0408">Iron</keyword>
<keyword id="KW-0411">Iron-sulfur</keyword>
<keyword id="KW-0479">Metal-binding</keyword>
<keyword id="KW-0813">Transport</keyword>
<evidence type="ECO:0000255" key="1">
    <source>
        <dbReference type="PROSITE-ProRule" id="PRU00705"/>
    </source>
</evidence>
<evidence type="ECO:0000305" key="2"/>
<gene>
    <name type="primary">hip</name>
</gene>